<accession>O59410</accession>
<keyword id="KW-0342">GTP-binding</keyword>
<keyword id="KW-0378">Hydrolase</keyword>
<keyword id="KW-0396">Initiation factor</keyword>
<keyword id="KW-0460">Magnesium</keyword>
<keyword id="KW-0479">Metal-binding</keyword>
<keyword id="KW-0547">Nucleotide-binding</keyword>
<keyword id="KW-0648">Protein biosynthesis</keyword>
<keyword id="KW-0862">Zinc</keyword>
<gene>
    <name evidence="2" type="primary">eif2g</name>
    <name type="ordered locus">PH1706</name>
</gene>
<feature type="chain" id="PRO_0000137461" description="Translation initiation factor 2 subunit gamma">
    <location>
        <begin position="1"/>
        <end position="411"/>
    </location>
</feature>
<feature type="domain" description="tr-type G" evidence="2">
    <location>
        <begin position="9"/>
        <end position="203"/>
    </location>
</feature>
<feature type="region of interest" description="G1" evidence="1">
    <location>
        <begin position="18"/>
        <end position="25"/>
    </location>
</feature>
<feature type="region of interest" description="G2" evidence="1">
    <location>
        <begin position="46"/>
        <end position="50"/>
    </location>
</feature>
<feature type="region of interest" description="G3" evidence="1">
    <location>
        <begin position="90"/>
        <end position="93"/>
    </location>
</feature>
<feature type="region of interest" description="G4" evidence="1">
    <location>
        <begin position="146"/>
        <end position="149"/>
    </location>
</feature>
<feature type="region of interest" description="G5" evidence="1">
    <location>
        <begin position="181"/>
        <end position="183"/>
    </location>
</feature>
<feature type="binding site" evidence="2">
    <location>
        <begin position="21"/>
        <end position="26"/>
    </location>
    <ligand>
        <name>GTP</name>
        <dbReference type="ChEBI" id="CHEBI:37565"/>
    </ligand>
</feature>
<feature type="binding site" evidence="2">
    <location>
        <position position="21"/>
    </location>
    <ligand>
        <name>Mg(2+)</name>
        <dbReference type="ChEBI" id="CHEBI:18420"/>
        <label>2</label>
    </ligand>
</feature>
<feature type="binding site" evidence="2">
    <location>
        <position position="25"/>
    </location>
    <ligand>
        <name>Mg(2+)</name>
        <dbReference type="ChEBI" id="CHEBI:18420"/>
        <label>1</label>
    </ligand>
</feature>
<feature type="binding site" evidence="2">
    <location>
        <position position="46"/>
    </location>
    <ligand>
        <name>Mg(2+)</name>
        <dbReference type="ChEBI" id="CHEBI:18420"/>
        <label>2</label>
    </ligand>
</feature>
<feature type="binding site" evidence="2">
    <location>
        <position position="48"/>
    </location>
    <ligand>
        <name>Mg(2+)</name>
        <dbReference type="ChEBI" id="CHEBI:18420"/>
        <label>1</label>
    </ligand>
</feature>
<feature type="binding site" evidence="2">
    <location>
        <position position="61"/>
    </location>
    <ligand>
        <name>Zn(2+)</name>
        <dbReference type="ChEBI" id="CHEBI:29105"/>
    </ligand>
</feature>
<feature type="binding site" evidence="2">
    <location>
        <position position="64"/>
    </location>
    <ligand>
        <name>Zn(2+)</name>
        <dbReference type="ChEBI" id="CHEBI:29105"/>
    </ligand>
</feature>
<feature type="binding site" evidence="2">
    <location>
        <position position="73"/>
    </location>
    <ligand>
        <name>Zn(2+)</name>
        <dbReference type="ChEBI" id="CHEBI:29105"/>
    </ligand>
</feature>
<feature type="binding site" evidence="2">
    <location>
        <position position="76"/>
    </location>
    <ligand>
        <name>Zn(2+)</name>
        <dbReference type="ChEBI" id="CHEBI:29105"/>
    </ligand>
</feature>
<feature type="binding site" evidence="2">
    <location>
        <begin position="146"/>
        <end position="149"/>
    </location>
    <ligand>
        <name>GTP</name>
        <dbReference type="ChEBI" id="CHEBI:37565"/>
    </ligand>
</feature>
<feature type="binding site" evidence="2">
    <location>
        <begin position="181"/>
        <end position="183"/>
    </location>
    <ligand>
        <name>GTP</name>
        <dbReference type="ChEBI" id="CHEBI:37565"/>
    </ligand>
</feature>
<organism>
    <name type="scientific">Pyrococcus horikoshii (strain ATCC 700860 / DSM 12428 / JCM 9974 / NBRC 100139 / OT-3)</name>
    <dbReference type="NCBI Taxonomy" id="70601"/>
    <lineage>
        <taxon>Archaea</taxon>
        <taxon>Methanobacteriati</taxon>
        <taxon>Methanobacteriota</taxon>
        <taxon>Thermococci</taxon>
        <taxon>Thermococcales</taxon>
        <taxon>Thermococcaceae</taxon>
        <taxon>Pyrococcus</taxon>
    </lineage>
</organism>
<sequence>MGERRKTRQAEVNIGMVGHVDHGKTTLTKALTGVWTDTHSEELRRGITIKIGFADAEIRRCPNCGRYSTSPVCPYCGHETEFVRRVSFIDAPGHEALMTTMLAGASLMDGAILVIAANEPCPRPQTREHLMALQIIGQKNIIIAQNKIELVDKEKALENYRQIKEFIKGTVAENAPIIPISALHGANIDVLVKAIEDFIPTPKRDPNKPPKMLVLRSFDVNKPGTPPEKLVGGVLGGSIVQGKLKVGDEIEIRPGIPYEEHGRIRYEPITTEIVSLQAGGQFVEEAYPGGLVGVGTKLDPYLTKGDLMAGNVVGKPGKLPPVWDSLRLEVHLLERVVGTEQELRVEPIKRKEVLLLNVGTARTMGLVTNLGKDEIEVKLQIPVCAEPGDRVAISRQIGSRWRLIGYGIIKE</sequence>
<dbReference type="EC" id="3.6.5.3" evidence="2"/>
<dbReference type="EMBL" id="BA000001">
    <property type="protein sequence ID" value="BAA30820.1"/>
    <property type="molecule type" value="Genomic_DNA"/>
</dbReference>
<dbReference type="PIR" id="E71178">
    <property type="entry name" value="E71178"/>
</dbReference>
<dbReference type="RefSeq" id="WP_010885772.1">
    <property type="nucleotide sequence ID" value="NC_000961.1"/>
</dbReference>
<dbReference type="SMR" id="O59410"/>
<dbReference type="STRING" id="70601.gene:9378702"/>
<dbReference type="EnsemblBacteria" id="BAA30820">
    <property type="protein sequence ID" value="BAA30820"/>
    <property type="gene ID" value="BAA30820"/>
</dbReference>
<dbReference type="GeneID" id="1442553"/>
<dbReference type="KEGG" id="pho:PH1706"/>
<dbReference type="eggNOG" id="arCOG01563">
    <property type="taxonomic scope" value="Archaea"/>
</dbReference>
<dbReference type="OrthoDB" id="7798at2157"/>
<dbReference type="Proteomes" id="UP000000752">
    <property type="component" value="Chromosome"/>
</dbReference>
<dbReference type="GO" id="GO:0005829">
    <property type="term" value="C:cytosol"/>
    <property type="evidence" value="ECO:0007669"/>
    <property type="project" value="TreeGrafter"/>
</dbReference>
<dbReference type="GO" id="GO:0005525">
    <property type="term" value="F:GTP binding"/>
    <property type="evidence" value="ECO:0007669"/>
    <property type="project" value="UniProtKB-UniRule"/>
</dbReference>
<dbReference type="GO" id="GO:0003924">
    <property type="term" value="F:GTPase activity"/>
    <property type="evidence" value="ECO:0007669"/>
    <property type="project" value="InterPro"/>
</dbReference>
<dbReference type="GO" id="GO:0046872">
    <property type="term" value="F:metal ion binding"/>
    <property type="evidence" value="ECO:0007669"/>
    <property type="project" value="UniProtKB-KW"/>
</dbReference>
<dbReference type="GO" id="GO:0003746">
    <property type="term" value="F:translation elongation factor activity"/>
    <property type="evidence" value="ECO:0007669"/>
    <property type="project" value="UniProtKB-UniRule"/>
</dbReference>
<dbReference type="GO" id="GO:0003743">
    <property type="term" value="F:translation initiation factor activity"/>
    <property type="evidence" value="ECO:0007669"/>
    <property type="project" value="UniProtKB-KW"/>
</dbReference>
<dbReference type="GO" id="GO:0000049">
    <property type="term" value="F:tRNA binding"/>
    <property type="evidence" value="ECO:0007669"/>
    <property type="project" value="InterPro"/>
</dbReference>
<dbReference type="GO" id="GO:0001731">
    <property type="term" value="P:formation of translation preinitiation complex"/>
    <property type="evidence" value="ECO:0007669"/>
    <property type="project" value="TreeGrafter"/>
</dbReference>
<dbReference type="CDD" id="cd01888">
    <property type="entry name" value="eIF2_gamma"/>
    <property type="match status" value="1"/>
</dbReference>
<dbReference type="CDD" id="cd03688">
    <property type="entry name" value="eIF2_gamma_II"/>
    <property type="match status" value="1"/>
</dbReference>
<dbReference type="CDD" id="cd15490">
    <property type="entry name" value="eIF2_gamma_III"/>
    <property type="match status" value="1"/>
</dbReference>
<dbReference type="FunFam" id="2.40.30.10:FF:000009">
    <property type="entry name" value="Eukaryotic translation initiation factor 2 subunit gamma"/>
    <property type="match status" value="1"/>
</dbReference>
<dbReference type="FunFam" id="3.40.50.300:FF:000065">
    <property type="entry name" value="Eukaryotic translation initiation factor 2 subunit gamma"/>
    <property type="match status" value="1"/>
</dbReference>
<dbReference type="FunFam" id="2.40.30.10:FF:000075">
    <property type="entry name" value="Translation initiation factor 2 subunit gamma"/>
    <property type="match status" value="1"/>
</dbReference>
<dbReference type="Gene3D" id="3.40.50.300">
    <property type="entry name" value="P-loop containing nucleotide triphosphate hydrolases"/>
    <property type="match status" value="1"/>
</dbReference>
<dbReference type="Gene3D" id="2.40.30.10">
    <property type="entry name" value="Translation factors"/>
    <property type="match status" value="2"/>
</dbReference>
<dbReference type="HAMAP" id="MF_00119">
    <property type="entry name" value="eIF_2_gamma"/>
    <property type="match status" value="1"/>
</dbReference>
<dbReference type="InterPro" id="IPR004161">
    <property type="entry name" value="EFTu-like_2"/>
</dbReference>
<dbReference type="InterPro" id="IPR050543">
    <property type="entry name" value="eIF2G"/>
</dbReference>
<dbReference type="InterPro" id="IPR015256">
    <property type="entry name" value="eIF2g_C"/>
</dbReference>
<dbReference type="InterPro" id="IPR044127">
    <property type="entry name" value="eIF2g_dom_2"/>
</dbReference>
<dbReference type="InterPro" id="IPR044128">
    <property type="entry name" value="eIF2g_GTP-bd"/>
</dbReference>
<dbReference type="InterPro" id="IPR027417">
    <property type="entry name" value="P-loop_NTPase"/>
</dbReference>
<dbReference type="InterPro" id="IPR005225">
    <property type="entry name" value="Small_GTP-bd"/>
</dbReference>
<dbReference type="InterPro" id="IPR000795">
    <property type="entry name" value="T_Tr_GTP-bd_dom"/>
</dbReference>
<dbReference type="InterPro" id="IPR022424">
    <property type="entry name" value="TIF2_gsu"/>
</dbReference>
<dbReference type="InterPro" id="IPR009000">
    <property type="entry name" value="Transl_B-barrel_sf"/>
</dbReference>
<dbReference type="InterPro" id="IPR009001">
    <property type="entry name" value="Transl_elong_EF1A/Init_IF2_C"/>
</dbReference>
<dbReference type="NCBIfam" id="TIGR03680">
    <property type="entry name" value="eif2g_arch"/>
    <property type="match status" value="1"/>
</dbReference>
<dbReference type="NCBIfam" id="NF003077">
    <property type="entry name" value="PRK04000.1"/>
    <property type="match status" value="1"/>
</dbReference>
<dbReference type="NCBIfam" id="TIGR00231">
    <property type="entry name" value="small_GTP"/>
    <property type="match status" value="1"/>
</dbReference>
<dbReference type="PANTHER" id="PTHR42854">
    <property type="entry name" value="EUKARYOTIC TRANSLATION INITIATION FACTOR 2 SUBUNIT 3 FAMILY MEMBER"/>
    <property type="match status" value="1"/>
</dbReference>
<dbReference type="PANTHER" id="PTHR42854:SF3">
    <property type="entry name" value="EUKARYOTIC TRANSLATION INITIATION FACTOR 2 SUBUNIT 3-RELATED"/>
    <property type="match status" value="1"/>
</dbReference>
<dbReference type="Pfam" id="PF09173">
    <property type="entry name" value="eIF2_C"/>
    <property type="match status" value="1"/>
</dbReference>
<dbReference type="Pfam" id="PF00009">
    <property type="entry name" value="GTP_EFTU"/>
    <property type="match status" value="1"/>
</dbReference>
<dbReference type="Pfam" id="PF03144">
    <property type="entry name" value="GTP_EFTU_D2"/>
    <property type="match status" value="1"/>
</dbReference>
<dbReference type="PRINTS" id="PR00315">
    <property type="entry name" value="ELONGATNFCT"/>
</dbReference>
<dbReference type="SUPFAM" id="SSF50465">
    <property type="entry name" value="EF-Tu/eEF-1alpha/eIF2-gamma C-terminal domain"/>
    <property type="match status" value="1"/>
</dbReference>
<dbReference type="SUPFAM" id="SSF52540">
    <property type="entry name" value="P-loop containing nucleoside triphosphate hydrolases"/>
    <property type="match status" value="1"/>
</dbReference>
<dbReference type="SUPFAM" id="SSF50447">
    <property type="entry name" value="Translation proteins"/>
    <property type="match status" value="1"/>
</dbReference>
<dbReference type="PROSITE" id="PS51722">
    <property type="entry name" value="G_TR_2"/>
    <property type="match status" value="1"/>
</dbReference>
<reference key="1">
    <citation type="journal article" date="1998" name="DNA Res.">
        <title>Complete sequence and gene organization of the genome of a hyper-thermophilic archaebacterium, Pyrococcus horikoshii OT3.</title>
        <authorList>
            <person name="Kawarabayasi Y."/>
            <person name="Sawada M."/>
            <person name="Horikawa H."/>
            <person name="Haikawa Y."/>
            <person name="Hino Y."/>
            <person name="Yamamoto S."/>
            <person name="Sekine M."/>
            <person name="Baba S."/>
            <person name="Kosugi H."/>
            <person name="Hosoyama A."/>
            <person name="Nagai Y."/>
            <person name="Sakai M."/>
            <person name="Ogura K."/>
            <person name="Otsuka R."/>
            <person name="Nakazawa H."/>
            <person name="Takamiya M."/>
            <person name="Ohfuku Y."/>
            <person name="Funahashi T."/>
            <person name="Tanaka T."/>
            <person name="Kudoh Y."/>
            <person name="Yamazaki J."/>
            <person name="Kushida N."/>
            <person name="Oguchi A."/>
            <person name="Aoki K."/>
            <person name="Yoshizawa T."/>
            <person name="Nakamura Y."/>
            <person name="Robb F.T."/>
            <person name="Horikoshi K."/>
            <person name="Masuchi Y."/>
            <person name="Shizuya H."/>
            <person name="Kikuchi H."/>
        </authorList>
    </citation>
    <scope>NUCLEOTIDE SEQUENCE [LARGE SCALE GENOMIC DNA]</scope>
    <source>
        <strain>ATCC 700860 / DSM 12428 / JCM 9974 / NBRC 100139 / OT-3</strain>
    </source>
</reference>
<name>IF2G_PYRHO</name>
<protein>
    <recommendedName>
        <fullName evidence="2">Translation initiation factor 2 subunit gamma</fullName>
        <ecNumber evidence="2">3.6.5.3</ecNumber>
    </recommendedName>
    <alternativeName>
        <fullName evidence="2">aIF2-gamma</fullName>
    </alternativeName>
    <alternativeName>
        <fullName evidence="2">eIF-2-gamma</fullName>
    </alternativeName>
</protein>
<evidence type="ECO:0000250" key="1">
    <source>
        <dbReference type="UniProtKB" id="Q980A5"/>
    </source>
</evidence>
<evidence type="ECO:0000255" key="2">
    <source>
        <dbReference type="HAMAP-Rule" id="MF_00119"/>
    </source>
</evidence>
<evidence type="ECO:0000305" key="3"/>
<proteinExistence type="inferred from homology"/>
<comment type="function">
    <text evidence="2">eIF-2 functions in the early steps of protein synthesis by forming a ternary complex with GTP and initiator tRNA.</text>
</comment>
<comment type="catalytic activity">
    <reaction evidence="2">
        <text>GTP + H2O = GDP + phosphate + H(+)</text>
        <dbReference type="Rhea" id="RHEA:19669"/>
        <dbReference type="ChEBI" id="CHEBI:15377"/>
        <dbReference type="ChEBI" id="CHEBI:15378"/>
        <dbReference type="ChEBI" id="CHEBI:37565"/>
        <dbReference type="ChEBI" id="CHEBI:43474"/>
        <dbReference type="ChEBI" id="CHEBI:58189"/>
        <dbReference type="EC" id="3.6.5.3"/>
    </reaction>
</comment>
<comment type="cofactor">
    <cofactor evidence="2">
        <name>Mg(2+)</name>
        <dbReference type="ChEBI" id="CHEBI:18420"/>
    </cofactor>
</comment>
<comment type="subunit">
    <text evidence="2">Heterotrimer composed of an alpha, a beta and a gamma chain.</text>
</comment>
<comment type="similarity">
    <text evidence="2 3">Belongs to the TRAFAC class translation factor GTPase superfamily. Classic translation factor GTPase family. EIF2G subfamily.</text>
</comment>